<reference key="1">
    <citation type="submission" date="2008-06" db="EMBL/GenBank/DDBJ databases">
        <title>Complete sequence of Chloroherpeton thalassium ATCC 35110.</title>
        <authorList>
            <consortium name="US DOE Joint Genome Institute"/>
            <person name="Lucas S."/>
            <person name="Copeland A."/>
            <person name="Lapidus A."/>
            <person name="Glavina del Rio T."/>
            <person name="Dalin E."/>
            <person name="Tice H."/>
            <person name="Bruce D."/>
            <person name="Goodwin L."/>
            <person name="Pitluck S."/>
            <person name="Schmutz J."/>
            <person name="Larimer F."/>
            <person name="Land M."/>
            <person name="Hauser L."/>
            <person name="Kyrpides N."/>
            <person name="Mikhailova N."/>
            <person name="Liu Z."/>
            <person name="Li T."/>
            <person name="Zhao F."/>
            <person name="Overmann J."/>
            <person name="Bryant D.A."/>
            <person name="Richardson P."/>
        </authorList>
    </citation>
    <scope>NUCLEOTIDE SEQUENCE [LARGE SCALE GENOMIC DNA]</scope>
    <source>
        <strain>ATCC 35110 / GB-78</strain>
    </source>
</reference>
<dbReference type="EMBL" id="CP001100">
    <property type="protein sequence ID" value="ACF13000.1"/>
    <property type="molecule type" value="Genomic_DNA"/>
</dbReference>
<dbReference type="RefSeq" id="WP_012499084.1">
    <property type="nucleotide sequence ID" value="NC_011026.1"/>
</dbReference>
<dbReference type="SMR" id="B3QV46"/>
<dbReference type="STRING" id="517418.Ctha_0529"/>
<dbReference type="KEGG" id="cts:Ctha_0529"/>
<dbReference type="eggNOG" id="COG0052">
    <property type="taxonomic scope" value="Bacteria"/>
</dbReference>
<dbReference type="HOGENOM" id="CLU_040318_1_2_10"/>
<dbReference type="OrthoDB" id="9808036at2"/>
<dbReference type="Proteomes" id="UP000001208">
    <property type="component" value="Chromosome"/>
</dbReference>
<dbReference type="GO" id="GO:0022627">
    <property type="term" value="C:cytosolic small ribosomal subunit"/>
    <property type="evidence" value="ECO:0007669"/>
    <property type="project" value="TreeGrafter"/>
</dbReference>
<dbReference type="GO" id="GO:0003735">
    <property type="term" value="F:structural constituent of ribosome"/>
    <property type="evidence" value="ECO:0007669"/>
    <property type="project" value="InterPro"/>
</dbReference>
<dbReference type="GO" id="GO:0006412">
    <property type="term" value="P:translation"/>
    <property type="evidence" value="ECO:0007669"/>
    <property type="project" value="UniProtKB-UniRule"/>
</dbReference>
<dbReference type="CDD" id="cd01425">
    <property type="entry name" value="RPS2"/>
    <property type="match status" value="1"/>
</dbReference>
<dbReference type="FunFam" id="1.10.287.610:FF:000001">
    <property type="entry name" value="30S ribosomal protein S2"/>
    <property type="match status" value="1"/>
</dbReference>
<dbReference type="Gene3D" id="3.40.50.10490">
    <property type="entry name" value="Glucose-6-phosphate isomerase like protein, domain 1"/>
    <property type="match status" value="1"/>
</dbReference>
<dbReference type="Gene3D" id="1.10.287.610">
    <property type="entry name" value="Helix hairpin bin"/>
    <property type="match status" value="1"/>
</dbReference>
<dbReference type="HAMAP" id="MF_00291_B">
    <property type="entry name" value="Ribosomal_uS2_B"/>
    <property type="match status" value="1"/>
</dbReference>
<dbReference type="InterPro" id="IPR001865">
    <property type="entry name" value="Ribosomal_uS2"/>
</dbReference>
<dbReference type="InterPro" id="IPR005706">
    <property type="entry name" value="Ribosomal_uS2_bac/mit/plastid"/>
</dbReference>
<dbReference type="InterPro" id="IPR018130">
    <property type="entry name" value="Ribosomal_uS2_CS"/>
</dbReference>
<dbReference type="InterPro" id="IPR023591">
    <property type="entry name" value="Ribosomal_uS2_flav_dom_sf"/>
</dbReference>
<dbReference type="NCBIfam" id="TIGR01011">
    <property type="entry name" value="rpsB_bact"/>
    <property type="match status" value="1"/>
</dbReference>
<dbReference type="PANTHER" id="PTHR12534">
    <property type="entry name" value="30S RIBOSOMAL PROTEIN S2 PROKARYOTIC AND ORGANELLAR"/>
    <property type="match status" value="1"/>
</dbReference>
<dbReference type="PANTHER" id="PTHR12534:SF0">
    <property type="entry name" value="SMALL RIBOSOMAL SUBUNIT PROTEIN US2M"/>
    <property type="match status" value="1"/>
</dbReference>
<dbReference type="Pfam" id="PF00318">
    <property type="entry name" value="Ribosomal_S2"/>
    <property type="match status" value="1"/>
</dbReference>
<dbReference type="PRINTS" id="PR00395">
    <property type="entry name" value="RIBOSOMALS2"/>
</dbReference>
<dbReference type="SUPFAM" id="SSF52313">
    <property type="entry name" value="Ribosomal protein S2"/>
    <property type="match status" value="1"/>
</dbReference>
<dbReference type="PROSITE" id="PS00962">
    <property type="entry name" value="RIBOSOMAL_S2_1"/>
    <property type="match status" value="1"/>
</dbReference>
<dbReference type="PROSITE" id="PS00963">
    <property type="entry name" value="RIBOSOMAL_S2_2"/>
    <property type="match status" value="1"/>
</dbReference>
<sequence>MAQLKLEDLLKSGAHFGHLTRRWCPKMKPYIFMEKNGIHIIDLKKTVSLADDALNAVGAIASTGKEILFVGTKKQAKAIVAEQAERAGMPYVAERWLGGMLTNFSTIRQSIRRLNSIERMEIDGTFDMITKKERLMLMREKEKLVRVLGGISKMTRLPAAIFLIDVKKEHIAVREAYSLGIPIFAIVDTNCDPEFIDYVIPANDDAIRSIELITSSVADAIIDATAVQKDDEDAAATNLASEAQDEKSEA</sequence>
<keyword id="KW-1185">Reference proteome</keyword>
<keyword id="KW-0687">Ribonucleoprotein</keyword>
<keyword id="KW-0689">Ribosomal protein</keyword>
<organism>
    <name type="scientific">Chloroherpeton thalassium (strain ATCC 35110 / GB-78)</name>
    <dbReference type="NCBI Taxonomy" id="517418"/>
    <lineage>
        <taxon>Bacteria</taxon>
        <taxon>Pseudomonadati</taxon>
        <taxon>Chlorobiota</taxon>
        <taxon>Chlorobiia</taxon>
        <taxon>Chlorobiales</taxon>
        <taxon>Chloroherpetonaceae</taxon>
        <taxon>Chloroherpeton</taxon>
    </lineage>
</organism>
<gene>
    <name evidence="1" type="primary">rpsB</name>
    <name type="ordered locus">Ctha_0529</name>
</gene>
<comment type="similarity">
    <text evidence="1">Belongs to the universal ribosomal protein uS2 family.</text>
</comment>
<feature type="chain" id="PRO_1000115004" description="Small ribosomal subunit protein uS2">
    <location>
        <begin position="1"/>
        <end position="250"/>
    </location>
</feature>
<accession>B3QV46</accession>
<protein>
    <recommendedName>
        <fullName evidence="1">Small ribosomal subunit protein uS2</fullName>
    </recommendedName>
    <alternativeName>
        <fullName evidence="2">30S ribosomal protein S2</fullName>
    </alternativeName>
</protein>
<evidence type="ECO:0000255" key="1">
    <source>
        <dbReference type="HAMAP-Rule" id="MF_00291"/>
    </source>
</evidence>
<evidence type="ECO:0000305" key="2"/>
<proteinExistence type="inferred from homology"/>
<name>RS2_CHLT3</name>